<sequence length="343" mass="36436">MTLKGKKVTVHDMTLRDGMHPKRHLMTLDQMTAIATGLDAAGVPLIEVTHGDGLGGSSVNYGFPAHTDEEYLGAVIPKMKNAKVSALLLPGIGTVDHLKMARDLGVHTIRVATHCTEADVSEQHITMARKLEMDTVGFLMMAHMNSAEGLVKQAKLMESYGANCIYVTDSAGHLLPEGVKERLSAVRAALKPETELGFHGHHNLAMGVANSIAAIEVGANRIDAAAAGLGAGAGNTPMEVLIAVCSLMGIETGVDVAKITDVAEDLVVPMMDFPIRIDRDALTLGYAGVYGSFLLFAKRASAKYGVPARDILVELGRRGMVGGQEDMIEDTAITMARERGLLK</sequence>
<proteinExistence type="inferred from homology"/>
<dbReference type="EC" id="4.1.3.39" evidence="1"/>
<dbReference type="EMBL" id="CP000089">
    <property type="protein sequence ID" value="AAZ48511.1"/>
    <property type="molecule type" value="Genomic_DNA"/>
</dbReference>
<dbReference type="SMR" id="Q479H0"/>
<dbReference type="STRING" id="159087.Daro_3782"/>
<dbReference type="KEGG" id="dar:Daro_3782"/>
<dbReference type="eggNOG" id="COG0119">
    <property type="taxonomic scope" value="Bacteria"/>
</dbReference>
<dbReference type="HOGENOM" id="CLU_049173_0_0_4"/>
<dbReference type="OrthoDB" id="9803573at2"/>
<dbReference type="GO" id="GO:0003852">
    <property type="term" value="F:2-isopropylmalate synthase activity"/>
    <property type="evidence" value="ECO:0007669"/>
    <property type="project" value="TreeGrafter"/>
</dbReference>
<dbReference type="GO" id="GO:0008701">
    <property type="term" value="F:4-hydroxy-2-oxovalerate aldolase activity"/>
    <property type="evidence" value="ECO:0007669"/>
    <property type="project" value="UniProtKB-UniRule"/>
</dbReference>
<dbReference type="GO" id="GO:0030145">
    <property type="term" value="F:manganese ion binding"/>
    <property type="evidence" value="ECO:0007669"/>
    <property type="project" value="UniProtKB-UniRule"/>
</dbReference>
<dbReference type="GO" id="GO:0009056">
    <property type="term" value="P:catabolic process"/>
    <property type="evidence" value="ECO:0007669"/>
    <property type="project" value="UniProtKB-KW"/>
</dbReference>
<dbReference type="GO" id="GO:0009098">
    <property type="term" value="P:L-leucine biosynthetic process"/>
    <property type="evidence" value="ECO:0007669"/>
    <property type="project" value="TreeGrafter"/>
</dbReference>
<dbReference type="CDD" id="cd07943">
    <property type="entry name" value="DRE_TIM_HOA"/>
    <property type="match status" value="1"/>
</dbReference>
<dbReference type="Gene3D" id="1.10.8.60">
    <property type="match status" value="1"/>
</dbReference>
<dbReference type="Gene3D" id="3.20.20.70">
    <property type="entry name" value="Aldolase class I"/>
    <property type="match status" value="1"/>
</dbReference>
<dbReference type="HAMAP" id="MF_01656">
    <property type="entry name" value="HOA"/>
    <property type="match status" value="1"/>
</dbReference>
<dbReference type="InterPro" id="IPR050073">
    <property type="entry name" value="2-IPM_HCS-like"/>
</dbReference>
<dbReference type="InterPro" id="IPR017629">
    <property type="entry name" value="4OH_2_O-val_aldolase"/>
</dbReference>
<dbReference type="InterPro" id="IPR013785">
    <property type="entry name" value="Aldolase_TIM"/>
</dbReference>
<dbReference type="InterPro" id="IPR012425">
    <property type="entry name" value="DmpG_comm"/>
</dbReference>
<dbReference type="InterPro" id="IPR035685">
    <property type="entry name" value="DRE_TIM_HOA"/>
</dbReference>
<dbReference type="InterPro" id="IPR000891">
    <property type="entry name" value="PYR_CT"/>
</dbReference>
<dbReference type="NCBIfam" id="TIGR03217">
    <property type="entry name" value="4OH_2_O_val_ald"/>
    <property type="match status" value="1"/>
</dbReference>
<dbReference type="NCBIfam" id="NF006049">
    <property type="entry name" value="PRK08195.1"/>
    <property type="match status" value="1"/>
</dbReference>
<dbReference type="PANTHER" id="PTHR10277:SF9">
    <property type="entry name" value="2-ISOPROPYLMALATE SYNTHASE 1, CHLOROPLASTIC-RELATED"/>
    <property type="match status" value="1"/>
</dbReference>
<dbReference type="PANTHER" id="PTHR10277">
    <property type="entry name" value="HOMOCITRATE SYNTHASE-RELATED"/>
    <property type="match status" value="1"/>
</dbReference>
<dbReference type="Pfam" id="PF07836">
    <property type="entry name" value="DmpG_comm"/>
    <property type="match status" value="1"/>
</dbReference>
<dbReference type="Pfam" id="PF00682">
    <property type="entry name" value="HMGL-like"/>
    <property type="match status" value="1"/>
</dbReference>
<dbReference type="SUPFAM" id="SSF51569">
    <property type="entry name" value="Aldolase"/>
    <property type="match status" value="1"/>
</dbReference>
<dbReference type="SUPFAM" id="SSF89000">
    <property type="entry name" value="post-HMGL domain-like"/>
    <property type="match status" value="1"/>
</dbReference>
<dbReference type="PROSITE" id="PS50991">
    <property type="entry name" value="PYR_CT"/>
    <property type="match status" value="1"/>
</dbReference>
<keyword id="KW-0058">Aromatic hydrocarbons catabolism</keyword>
<keyword id="KW-0456">Lyase</keyword>
<keyword id="KW-0464">Manganese</keyword>
<keyword id="KW-0479">Metal-binding</keyword>
<comment type="catalytic activity">
    <reaction evidence="1">
        <text>(S)-4-hydroxy-2-oxopentanoate = acetaldehyde + pyruvate</text>
        <dbReference type="Rhea" id="RHEA:22624"/>
        <dbReference type="ChEBI" id="CHEBI:15343"/>
        <dbReference type="ChEBI" id="CHEBI:15361"/>
        <dbReference type="ChEBI" id="CHEBI:73143"/>
        <dbReference type="EC" id="4.1.3.39"/>
    </reaction>
</comment>
<comment type="similarity">
    <text evidence="1">Belongs to the 4-hydroxy-2-oxovalerate aldolase family.</text>
</comment>
<organism>
    <name type="scientific">Dechloromonas aromatica (strain RCB)</name>
    <dbReference type="NCBI Taxonomy" id="159087"/>
    <lineage>
        <taxon>Bacteria</taxon>
        <taxon>Pseudomonadati</taxon>
        <taxon>Pseudomonadota</taxon>
        <taxon>Betaproteobacteria</taxon>
        <taxon>Rhodocyclales</taxon>
        <taxon>Azonexaceae</taxon>
        <taxon>Dechloromonas</taxon>
    </lineage>
</organism>
<reference key="1">
    <citation type="journal article" date="2009" name="BMC Genomics">
        <title>Metabolic analysis of the soil microbe Dechloromonas aromatica str. RCB: indications of a surprisingly complex life-style and cryptic anaerobic pathways for aromatic degradation.</title>
        <authorList>
            <person name="Salinero K.K."/>
            <person name="Keller K."/>
            <person name="Feil W.S."/>
            <person name="Feil H."/>
            <person name="Trong S."/>
            <person name="Di Bartolo G."/>
            <person name="Lapidus A."/>
        </authorList>
    </citation>
    <scope>NUCLEOTIDE SEQUENCE [LARGE SCALE GENOMIC DNA]</scope>
    <source>
        <strain>RCB</strain>
    </source>
</reference>
<accession>Q479H0</accession>
<feature type="chain" id="PRO_0000387819" description="4-hydroxy-2-oxovalerate aldolase 4">
    <location>
        <begin position="1"/>
        <end position="343"/>
    </location>
</feature>
<feature type="domain" description="Pyruvate carboxyltransferase" evidence="1">
    <location>
        <begin position="8"/>
        <end position="260"/>
    </location>
</feature>
<feature type="active site" description="Proton acceptor" evidence="1">
    <location>
        <position position="20"/>
    </location>
</feature>
<feature type="binding site" evidence="1">
    <location>
        <begin position="16"/>
        <end position="17"/>
    </location>
    <ligand>
        <name>substrate</name>
    </ligand>
</feature>
<feature type="binding site" evidence="1">
    <location>
        <position position="17"/>
    </location>
    <ligand>
        <name>Mn(2+)</name>
        <dbReference type="ChEBI" id="CHEBI:29035"/>
    </ligand>
</feature>
<feature type="binding site" evidence="1">
    <location>
        <position position="170"/>
    </location>
    <ligand>
        <name>substrate</name>
    </ligand>
</feature>
<feature type="binding site" evidence="1">
    <location>
        <position position="199"/>
    </location>
    <ligand>
        <name>Mn(2+)</name>
        <dbReference type="ChEBI" id="CHEBI:29035"/>
    </ligand>
</feature>
<feature type="binding site" evidence="1">
    <location>
        <position position="199"/>
    </location>
    <ligand>
        <name>substrate</name>
    </ligand>
</feature>
<feature type="binding site" evidence="1">
    <location>
        <position position="201"/>
    </location>
    <ligand>
        <name>Mn(2+)</name>
        <dbReference type="ChEBI" id="CHEBI:29035"/>
    </ligand>
</feature>
<feature type="binding site" evidence="1">
    <location>
        <position position="290"/>
    </location>
    <ligand>
        <name>substrate</name>
    </ligand>
</feature>
<feature type="site" description="Transition state stabilizer" evidence="1">
    <location>
        <position position="16"/>
    </location>
</feature>
<protein>
    <recommendedName>
        <fullName evidence="1">4-hydroxy-2-oxovalerate aldolase 4</fullName>
        <shortName evidence="1">HOA 4</shortName>
        <ecNumber evidence="1">4.1.3.39</ecNumber>
    </recommendedName>
    <alternativeName>
        <fullName evidence="1">4-hydroxy-2-keto-pentanoic acid aldolase 4</fullName>
    </alternativeName>
    <alternativeName>
        <fullName evidence="1">4-hydroxy-2-oxopentanoate aldolase 4</fullName>
    </alternativeName>
</protein>
<evidence type="ECO:0000255" key="1">
    <source>
        <dbReference type="HAMAP-Rule" id="MF_01656"/>
    </source>
</evidence>
<gene>
    <name type="ordered locus">Daro_3782</name>
</gene>
<name>HOA4_DECAR</name>